<keyword id="KW-0963">Cytoplasm</keyword>
<keyword id="KW-0251">Elongation factor</keyword>
<keyword id="KW-0342">GTP-binding</keyword>
<keyword id="KW-0378">Hydrolase</keyword>
<keyword id="KW-0460">Magnesium</keyword>
<keyword id="KW-0479">Metal-binding</keyword>
<keyword id="KW-0547">Nucleotide-binding</keyword>
<keyword id="KW-0648">Protein biosynthesis</keyword>
<keyword id="KW-1185">Reference proteome</keyword>
<reference key="1">
    <citation type="journal article" date="2003" name="J. Bacteriol.">
        <title>Comparative analyses of the complete genome sequences of Pierce's disease and citrus variegated chlorosis strains of Xylella fastidiosa.</title>
        <authorList>
            <person name="Van Sluys M.A."/>
            <person name="de Oliveira M.C."/>
            <person name="Monteiro-Vitorello C.B."/>
            <person name="Miyaki C.Y."/>
            <person name="Furlan L.R."/>
            <person name="Camargo L.E.A."/>
            <person name="da Silva A.C.R."/>
            <person name="Moon D.H."/>
            <person name="Takita M.A."/>
            <person name="Lemos E.G.M."/>
            <person name="Machado M.A."/>
            <person name="Ferro M.I.T."/>
            <person name="da Silva F.R."/>
            <person name="Goldman M.H.S."/>
            <person name="Goldman G.H."/>
            <person name="Lemos M.V.F."/>
            <person name="El-Dorry H."/>
            <person name="Tsai S.M."/>
            <person name="Carrer H."/>
            <person name="Carraro D.M."/>
            <person name="de Oliveira R.C."/>
            <person name="Nunes L.R."/>
            <person name="Siqueira W.J."/>
            <person name="Coutinho L.L."/>
            <person name="Kimura E.T."/>
            <person name="Ferro E.S."/>
            <person name="Harakava R."/>
            <person name="Kuramae E.E."/>
            <person name="Marino C.L."/>
            <person name="Giglioti E."/>
            <person name="Abreu I.L."/>
            <person name="Alves L.M.C."/>
            <person name="do Amaral A.M."/>
            <person name="Baia G.S."/>
            <person name="Blanco S.R."/>
            <person name="Brito M.S."/>
            <person name="Cannavan F.S."/>
            <person name="Celestino A.V."/>
            <person name="da Cunha A.F."/>
            <person name="Fenille R.C."/>
            <person name="Ferro J.A."/>
            <person name="Formighieri E.F."/>
            <person name="Kishi L.T."/>
            <person name="Leoni S.G."/>
            <person name="Oliveira A.R."/>
            <person name="Rosa V.E. Jr."/>
            <person name="Sassaki F.T."/>
            <person name="Sena J.A.D."/>
            <person name="de Souza A.A."/>
            <person name="Truffi D."/>
            <person name="Tsukumo F."/>
            <person name="Yanai G.M."/>
            <person name="Zaros L.G."/>
            <person name="Civerolo E.L."/>
            <person name="Simpson A.J.G."/>
            <person name="Almeida N.F. Jr."/>
            <person name="Setubal J.C."/>
            <person name="Kitajima J.P."/>
        </authorList>
    </citation>
    <scope>NUCLEOTIDE SEQUENCE [LARGE SCALE GENOMIC DNA]</scope>
    <source>
        <strain>Temecula1 / ATCC 700964</strain>
    </source>
</reference>
<name>EFTU_XYLFT</name>
<proteinExistence type="inferred from homology"/>
<sequence length="396" mass="42906">MAQDKFKRTKLHVNVGTIGHVDHGKTTLTAALTKVGAERFGGEFKAYDAIDAAPEEKARGITISTAHVEYETEVRHYAHVDCPGHADYVKNMITGAAQMDGAILVCSAADGPMPQTREHILLARQVGVPYIVVFLNKADMVDDAELLELVEMEVRELLSKYDFPGDDTPIVRGSALKALEGDQSEIGVPAIIRLAEALDTHIPNPERAIDRPFLMPVEDVFSISGRGTVVTGRIECGVIKVGDEVEIVGIRPTSKTIVTGVEMFRKLLDQGQAGDNAGLLLRGTKRDEVERGQVLAKPGCIKAHKEFEAEVYVLSKEEGGRHTPFFNGYTPQFYMRTTDITGKVCLPEGVEMVMPGDNVKVTVSLINPVAMGEGQRFAIREGGRTVGAGVVSKVIG</sequence>
<evidence type="ECO:0000250" key="1"/>
<evidence type="ECO:0000255" key="2">
    <source>
        <dbReference type="HAMAP-Rule" id="MF_00118"/>
    </source>
</evidence>
<protein>
    <recommendedName>
        <fullName evidence="2">Elongation factor Tu</fullName>
        <shortName evidence="2">EF-Tu</shortName>
        <ecNumber evidence="2">3.6.5.3</ecNumber>
    </recommendedName>
</protein>
<comment type="function">
    <text evidence="2">GTP hydrolase that promotes the GTP-dependent binding of aminoacyl-tRNA to the A-site of ribosomes during protein biosynthesis.</text>
</comment>
<comment type="catalytic activity">
    <reaction evidence="2">
        <text>GTP + H2O = GDP + phosphate + H(+)</text>
        <dbReference type="Rhea" id="RHEA:19669"/>
        <dbReference type="ChEBI" id="CHEBI:15377"/>
        <dbReference type="ChEBI" id="CHEBI:15378"/>
        <dbReference type="ChEBI" id="CHEBI:37565"/>
        <dbReference type="ChEBI" id="CHEBI:43474"/>
        <dbReference type="ChEBI" id="CHEBI:58189"/>
        <dbReference type="EC" id="3.6.5.3"/>
    </reaction>
    <physiologicalReaction direction="left-to-right" evidence="2">
        <dbReference type="Rhea" id="RHEA:19670"/>
    </physiologicalReaction>
</comment>
<comment type="subunit">
    <text evidence="2">Monomer.</text>
</comment>
<comment type="subcellular location">
    <subcellularLocation>
        <location evidence="2">Cytoplasm</location>
    </subcellularLocation>
</comment>
<comment type="similarity">
    <text evidence="2">Belongs to the TRAFAC class translation factor GTPase superfamily. Classic translation factor GTPase family. EF-Tu/EF-1A subfamily.</text>
</comment>
<organism>
    <name type="scientific">Xylella fastidiosa (strain Temecula1 / ATCC 700964)</name>
    <dbReference type="NCBI Taxonomy" id="183190"/>
    <lineage>
        <taxon>Bacteria</taxon>
        <taxon>Pseudomonadati</taxon>
        <taxon>Pseudomonadota</taxon>
        <taxon>Gammaproteobacteria</taxon>
        <taxon>Lysobacterales</taxon>
        <taxon>Lysobacteraceae</taxon>
        <taxon>Xylella</taxon>
    </lineage>
</organism>
<gene>
    <name evidence="2" type="primary">tufA</name>
    <name type="ordered locus">PD_1996</name>
</gene>
<gene>
    <name evidence="2" type="primary">tufB</name>
    <name type="ordered locus">PD_2009</name>
</gene>
<feature type="initiator methionine" description="Removed" evidence="1">
    <location>
        <position position="1"/>
    </location>
</feature>
<feature type="chain" id="PRO_0000091442" description="Elongation factor Tu">
    <location>
        <begin position="2"/>
        <end position="396"/>
    </location>
</feature>
<feature type="domain" description="tr-type G">
    <location>
        <begin position="10"/>
        <end position="206"/>
    </location>
</feature>
<feature type="region of interest" description="G1" evidence="1">
    <location>
        <begin position="19"/>
        <end position="26"/>
    </location>
</feature>
<feature type="region of interest" description="G2" evidence="1">
    <location>
        <begin position="60"/>
        <end position="64"/>
    </location>
</feature>
<feature type="region of interest" description="G3" evidence="1">
    <location>
        <begin position="81"/>
        <end position="84"/>
    </location>
</feature>
<feature type="region of interest" description="G4" evidence="1">
    <location>
        <begin position="136"/>
        <end position="139"/>
    </location>
</feature>
<feature type="region of interest" description="G5" evidence="1">
    <location>
        <begin position="174"/>
        <end position="176"/>
    </location>
</feature>
<feature type="binding site" evidence="2">
    <location>
        <begin position="19"/>
        <end position="26"/>
    </location>
    <ligand>
        <name>GTP</name>
        <dbReference type="ChEBI" id="CHEBI:37565"/>
    </ligand>
</feature>
<feature type="binding site" evidence="2">
    <location>
        <position position="26"/>
    </location>
    <ligand>
        <name>Mg(2+)</name>
        <dbReference type="ChEBI" id="CHEBI:18420"/>
    </ligand>
</feature>
<feature type="binding site" evidence="2">
    <location>
        <begin position="81"/>
        <end position="85"/>
    </location>
    <ligand>
        <name>GTP</name>
        <dbReference type="ChEBI" id="CHEBI:37565"/>
    </ligand>
</feature>
<feature type="binding site" evidence="2">
    <location>
        <begin position="136"/>
        <end position="139"/>
    </location>
    <ligand>
        <name>GTP</name>
        <dbReference type="ChEBI" id="CHEBI:37565"/>
    </ligand>
</feature>
<accession>Q877P8</accession>
<dbReference type="EC" id="3.6.5.3" evidence="2"/>
<dbReference type="EMBL" id="AE009442">
    <property type="protein sequence ID" value="AAO29825.1"/>
    <property type="molecule type" value="Genomic_DNA"/>
</dbReference>
<dbReference type="EMBL" id="AE009442">
    <property type="protein sequence ID" value="AAO29837.1"/>
    <property type="molecule type" value="Genomic_DNA"/>
</dbReference>
<dbReference type="SMR" id="Q877P8"/>
<dbReference type="KEGG" id="xft:PD_1996"/>
<dbReference type="KEGG" id="xft:PD_2009"/>
<dbReference type="HOGENOM" id="CLU_007265_0_0_6"/>
<dbReference type="Proteomes" id="UP000002516">
    <property type="component" value="Chromosome"/>
</dbReference>
<dbReference type="GO" id="GO:0005829">
    <property type="term" value="C:cytosol"/>
    <property type="evidence" value="ECO:0007669"/>
    <property type="project" value="TreeGrafter"/>
</dbReference>
<dbReference type="GO" id="GO:0005525">
    <property type="term" value="F:GTP binding"/>
    <property type="evidence" value="ECO:0007669"/>
    <property type="project" value="UniProtKB-UniRule"/>
</dbReference>
<dbReference type="GO" id="GO:0003924">
    <property type="term" value="F:GTPase activity"/>
    <property type="evidence" value="ECO:0007669"/>
    <property type="project" value="InterPro"/>
</dbReference>
<dbReference type="GO" id="GO:0097216">
    <property type="term" value="F:guanosine tetraphosphate binding"/>
    <property type="evidence" value="ECO:0007669"/>
    <property type="project" value="UniProtKB-ARBA"/>
</dbReference>
<dbReference type="GO" id="GO:0003746">
    <property type="term" value="F:translation elongation factor activity"/>
    <property type="evidence" value="ECO:0007669"/>
    <property type="project" value="UniProtKB-UniRule"/>
</dbReference>
<dbReference type="CDD" id="cd01884">
    <property type="entry name" value="EF_Tu"/>
    <property type="match status" value="1"/>
</dbReference>
<dbReference type="CDD" id="cd03697">
    <property type="entry name" value="EFTU_II"/>
    <property type="match status" value="1"/>
</dbReference>
<dbReference type="CDD" id="cd03707">
    <property type="entry name" value="EFTU_III"/>
    <property type="match status" value="1"/>
</dbReference>
<dbReference type="FunFam" id="2.40.30.10:FF:000001">
    <property type="entry name" value="Elongation factor Tu"/>
    <property type="match status" value="1"/>
</dbReference>
<dbReference type="FunFam" id="3.40.50.300:FF:000003">
    <property type="entry name" value="Elongation factor Tu"/>
    <property type="match status" value="1"/>
</dbReference>
<dbReference type="Gene3D" id="3.40.50.300">
    <property type="entry name" value="P-loop containing nucleotide triphosphate hydrolases"/>
    <property type="match status" value="1"/>
</dbReference>
<dbReference type="Gene3D" id="2.40.30.10">
    <property type="entry name" value="Translation factors"/>
    <property type="match status" value="2"/>
</dbReference>
<dbReference type="HAMAP" id="MF_00118_B">
    <property type="entry name" value="EF_Tu_B"/>
    <property type="match status" value="1"/>
</dbReference>
<dbReference type="InterPro" id="IPR041709">
    <property type="entry name" value="EF-Tu_GTP-bd"/>
</dbReference>
<dbReference type="InterPro" id="IPR050055">
    <property type="entry name" value="EF-Tu_GTPase"/>
</dbReference>
<dbReference type="InterPro" id="IPR004161">
    <property type="entry name" value="EFTu-like_2"/>
</dbReference>
<dbReference type="InterPro" id="IPR033720">
    <property type="entry name" value="EFTU_2"/>
</dbReference>
<dbReference type="InterPro" id="IPR031157">
    <property type="entry name" value="G_TR_CS"/>
</dbReference>
<dbReference type="InterPro" id="IPR027417">
    <property type="entry name" value="P-loop_NTPase"/>
</dbReference>
<dbReference type="InterPro" id="IPR005225">
    <property type="entry name" value="Small_GTP-bd"/>
</dbReference>
<dbReference type="InterPro" id="IPR000795">
    <property type="entry name" value="T_Tr_GTP-bd_dom"/>
</dbReference>
<dbReference type="InterPro" id="IPR009000">
    <property type="entry name" value="Transl_B-barrel_sf"/>
</dbReference>
<dbReference type="InterPro" id="IPR009001">
    <property type="entry name" value="Transl_elong_EF1A/Init_IF2_C"/>
</dbReference>
<dbReference type="InterPro" id="IPR004541">
    <property type="entry name" value="Transl_elong_EFTu/EF1A_bac/org"/>
</dbReference>
<dbReference type="InterPro" id="IPR004160">
    <property type="entry name" value="Transl_elong_EFTu/EF1A_C"/>
</dbReference>
<dbReference type="NCBIfam" id="TIGR00485">
    <property type="entry name" value="EF-Tu"/>
    <property type="match status" value="1"/>
</dbReference>
<dbReference type="NCBIfam" id="NF000766">
    <property type="entry name" value="PRK00049.1"/>
    <property type="match status" value="1"/>
</dbReference>
<dbReference type="NCBIfam" id="NF009372">
    <property type="entry name" value="PRK12735.1"/>
    <property type="match status" value="1"/>
</dbReference>
<dbReference type="NCBIfam" id="NF009373">
    <property type="entry name" value="PRK12736.1"/>
    <property type="match status" value="1"/>
</dbReference>
<dbReference type="NCBIfam" id="TIGR00231">
    <property type="entry name" value="small_GTP"/>
    <property type="match status" value="1"/>
</dbReference>
<dbReference type="PANTHER" id="PTHR43721:SF22">
    <property type="entry name" value="ELONGATION FACTOR TU, MITOCHONDRIAL"/>
    <property type="match status" value="1"/>
</dbReference>
<dbReference type="PANTHER" id="PTHR43721">
    <property type="entry name" value="ELONGATION FACTOR TU-RELATED"/>
    <property type="match status" value="1"/>
</dbReference>
<dbReference type="Pfam" id="PF00009">
    <property type="entry name" value="GTP_EFTU"/>
    <property type="match status" value="1"/>
</dbReference>
<dbReference type="Pfam" id="PF03144">
    <property type="entry name" value="GTP_EFTU_D2"/>
    <property type="match status" value="1"/>
</dbReference>
<dbReference type="Pfam" id="PF03143">
    <property type="entry name" value="GTP_EFTU_D3"/>
    <property type="match status" value="1"/>
</dbReference>
<dbReference type="PRINTS" id="PR00315">
    <property type="entry name" value="ELONGATNFCT"/>
</dbReference>
<dbReference type="SUPFAM" id="SSF50465">
    <property type="entry name" value="EF-Tu/eEF-1alpha/eIF2-gamma C-terminal domain"/>
    <property type="match status" value="1"/>
</dbReference>
<dbReference type="SUPFAM" id="SSF52540">
    <property type="entry name" value="P-loop containing nucleoside triphosphate hydrolases"/>
    <property type="match status" value="1"/>
</dbReference>
<dbReference type="SUPFAM" id="SSF50447">
    <property type="entry name" value="Translation proteins"/>
    <property type="match status" value="1"/>
</dbReference>
<dbReference type="PROSITE" id="PS00301">
    <property type="entry name" value="G_TR_1"/>
    <property type="match status" value="1"/>
</dbReference>
<dbReference type="PROSITE" id="PS51722">
    <property type="entry name" value="G_TR_2"/>
    <property type="match status" value="1"/>
</dbReference>